<feature type="signal peptide" evidence="4">
    <location>
        <begin position="1"/>
        <end position="26"/>
    </location>
</feature>
<feature type="propeptide" id="PRO_0000012371" evidence="4">
    <location>
        <begin position="27"/>
        <end position="40"/>
    </location>
</feature>
<feature type="chain" id="PRO_0000012372" description="Atrial natriuretic peptide receptor 3">
    <location>
        <begin position="41"/>
        <end position="536"/>
    </location>
</feature>
<feature type="topological domain" description="Extracellular" evidence="4">
    <location>
        <begin position="41"/>
        <end position="478"/>
    </location>
</feature>
<feature type="transmembrane region" description="Helical" evidence="4">
    <location>
        <begin position="479"/>
        <end position="499"/>
    </location>
</feature>
<feature type="topological domain" description="Cytoplasmic" evidence="4">
    <location>
        <begin position="500"/>
        <end position="536"/>
    </location>
</feature>
<feature type="binding site" evidence="1">
    <location>
        <position position="101"/>
    </location>
    <ligand>
        <name>chloride</name>
        <dbReference type="ChEBI" id="CHEBI:17996"/>
    </ligand>
</feature>
<feature type="binding site" evidence="1">
    <location>
        <position position="130"/>
    </location>
    <ligand>
        <name>chloride</name>
        <dbReference type="ChEBI" id="CHEBI:17996"/>
    </ligand>
</feature>
<feature type="binding site" evidence="1">
    <location>
        <position position="131"/>
    </location>
    <ligand>
        <name>chloride</name>
        <dbReference type="ChEBI" id="CHEBI:17996"/>
    </ligand>
</feature>
<feature type="glycosylation site" description="N-linked (GlcNAc...) asparagine" evidence="4">
    <location>
        <position position="81"/>
    </location>
</feature>
<feature type="glycosylation site" description="N-linked (GlcNAc...) asparagine" evidence="4">
    <location>
        <position position="288"/>
    </location>
</feature>
<feature type="glycosylation site" description="N-linked (GlcNAc...) asparagine" evidence="4">
    <location>
        <position position="389"/>
    </location>
</feature>
<feature type="disulfide bond" evidence="2">
    <location>
        <begin position="103"/>
        <end position="131"/>
    </location>
</feature>
<feature type="disulfide bond" evidence="2">
    <location>
        <begin position="208"/>
        <end position="256"/>
    </location>
</feature>
<feature type="disulfide bond" description="Interchain" evidence="2">
    <location>
        <position position="468"/>
    </location>
</feature>
<feature type="sequence variant" description="In Lgj-2J." evidence="6">
    <location>
        <begin position="66"/>
        <end position="77"/>
    </location>
</feature>
<feature type="sequence variant" description="In Lgj." evidence="6">
    <original>H</original>
    <variation>N</variation>
    <location>
        <position position="168"/>
    </location>
</feature>
<feature type="sequence conflict" description="In Ref. 1; BAA11241 and 2; AAF00104/AAF00105/AAF00107." evidence="10" ref="1 2">
    <original>L</original>
    <variation>F</variation>
    <location>
        <position position="4"/>
    </location>
</feature>
<feature type="sequence conflict" description="In Ref. 1; BAA11241." evidence="10" ref="1">
    <original>DS</original>
    <variation>IT</variation>
    <location>
        <begin position="58"/>
        <end position="59"/>
    </location>
</feature>
<feature type="sequence conflict" description="In Ref. 1; BAA11241." evidence="10" ref="1">
    <original>E</original>
    <variation>G</variation>
    <location>
        <position position="132"/>
    </location>
</feature>
<feature type="sequence conflict" description="In Ref. 5; AAB51036." evidence="10" ref="5">
    <original>G</original>
    <variation>V</variation>
    <location>
        <position position="293"/>
    </location>
</feature>
<feature type="sequence conflict" description="In Ref. 5; AAB51036." evidence="10" ref="5">
    <original>Y</original>
    <variation>C</variation>
    <location>
        <position position="348"/>
    </location>
</feature>
<protein>
    <recommendedName>
        <fullName>Atrial natriuretic peptide receptor 3</fullName>
    </recommendedName>
    <alternativeName>
        <fullName>Atrial natriuretic peptide clearance receptor</fullName>
    </alternativeName>
    <alternativeName>
        <fullName>Atrial natriuretic peptide receptor type C</fullName>
        <shortName>ANP-C</shortName>
        <shortName>ANPR-C</shortName>
        <shortName>NPR-C</shortName>
    </alternativeName>
    <alternativeName>
        <fullName>EF-2</fullName>
    </alternativeName>
</protein>
<reference key="1">
    <citation type="journal article" date="1996" name="Eur. J. Biochem.">
        <title>Structure of the 5'-flanking regulatory region of the mouse gene encoding the clearance receptor for atrial natriuretic peptide.</title>
        <authorList>
            <person name="Yanaka N."/>
            <person name="Kotera J."/>
            <person name="Taguchi I."/>
            <person name="Sugiura M."/>
            <person name="Kawashima K."/>
            <person name="Omori K."/>
        </authorList>
    </citation>
    <scope>NUCLEOTIDE SEQUENCE [MRNA]</scope>
    <source>
        <strain>BALB/cJ</strain>
        <tissue>Lung</tissue>
    </source>
</reference>
<reference key="2">
    <citation type="journal article" date="1999" name="Proc. Natl. Acad. Sci. U.S.A.">
        <title>Three new allelic mouse mutations that cause skeletal overgrowth involve the natriuretic peptide receptor C gene (Npr3).</title>
        <authorList>
            <person name="Jaubert J."/>
            <person name="Jaubert F."/>
            <person name="Martin N."/>
            <person name="Washburn L.L."/>
            <person name="Lee B.K."/>
            <person name="Eicher E.M."/>
            <person name="Guenet J.-L."/>
        </authorList>
    </citation>
    <scope>NUCLEOTIDE SEQUENCE [GENOMIC DNA]</scope>
    <scope>VARIANT LGJ ASN-168</scope>
    <scope>VARIANT LGJ-2J 66-ARG--SER-77 DEL</scope>
    <scope>POSSIBLE INVOLVEMENT IN SKELETAL-OVERGROWTH SYNDROME</scope>
    <source>
        <strain>129/Sv</strain>
        <strain>BALB/cJ</strain>
    </source>
</reference>
<reference key="3">
    <citation type="journal article" date="2009" name="PLoS Biol.">
        <title>Lineage-specific biology revealed by a finished genome assembly of the mouse.</title>
        <authorList>
            <person name="Church D.M."/>
            <person name="Goodstadt L."/>
            <person name="Hillier L.W."/>
            <person name="Zody M.C."/>
            <person name="Goldstein S."/>
            <person name="She X."/>
            <person name="Bult C.J."/>
            <person name="Agarwala R."/>
            <person name="Cherry J.L."/>
            <person name="DiCuccio M."/>
            <person name="Hlavina W."/>
            <person name="Kapustin Y."/>
            <person name="Meric P."/>
            <person name="Maglott D."/>
            <person name="Birtle Z."/>
            <person name="Marques A.C."/>
            <person name="Graves T."/>
            <person name="Zhou S."/>
            <person name="Teague B."/>
            <person name="Potamousis K."/>
            <person name="Churas C."/>
            <person name="Place M."/>
            <person name="Herschleb J."/>
            <person name="Runnheim R."/>
            <person name="Forrest D."/>
            <person name="Amos-Landgraf J."/>
            <person name="Schwartz D.C."/>
            <person name="Cheng Z."/>
            <person name="Lindblad-Toh K."/>
            <person name="Eichler E.E."/>
            <person name="Ponting C.P."/>
        </authorList>
    </citation>
    <scope>NUCLEOTIDE SEQUENCE [LARGE SCALE GENOMIC DNA]</scope>
    <source>
        <strain>C57BL/6J</strain>
    </source>
</reference>
<reference key="4">
    <citation type="submission" date="2005-09" db="EMBL/GenBank/DDBJ databases">
        <authorList>
            <person name="Mural R.J."/>
            <person name="Adams M.D."/>
            <person name="Myers E.W."/>
            <person name="Smith H.O."/>
            <person name="Venter J.C."/>
        </authorList>
    </citation>
    <scope>NUCLEOTIDE SEQUENCE [LARGE SCALE GENOMIC DNA]</scope>
</reference>
<reference key="5">
    <citation type="journal article" date="1997" name="Mol. Cell. Biol.">
        <title>E2a-Pbx1 induces aberrant expression of tissue-specific and developmentally regulated genes when expressed in NIH 3T3 fibroblasts.</title>
        <authorList>
            <person name="Fu X."/>
            <person name="Kamps M.P."/>
        </authorList>
    </citation>
    <scope>NUCLEOTIDE SEQUENCE [MRNA] OF 255-439</scope>
</reference>
<reference key="6">
    <citation type="journal article" date="1999" name="Proc. Natl. Acad. Sci. U.S.A.">
        <title>The natriuretic peptide clearance receptor locally modulates the physiological effects of the natriuretic peptide system.</title>
        <authorList>
            <person name="Matsukawa N."/>
            <person name="Grzesik W.J."/>
            <person name="Takahashi N."/>
            <person name="Pandey K.N."/>
            <person name="Pang S."/>
            <person name="Yamauchi M."/>
            <person name="Smithies O."/>
        </authorList>
    </citation>
    <scope>FUNCTION</scope>
    <scope>DISRUPTION PHENOTYPE</scope>
</reference>
<reference key="7">
    <citation type="journal article" date="2003" name="J. Biol. Chem.">
        <title>Osteocrin, a novel bone-specific secreted protein that modulates the osteoblast phenotype.</title>
        <authorList>
            <person name="Thomas G."/>
            <person name="Moffatt P."/>
            <person name="Salois P."/>
            <person name="Gaumond M.-H."/>
            <person name="Gingras R."/>
            <person name="Godin E."/>
            <person name="Miao D."/>
            <person name="Goltzman D."/>
            <person name="Lanctot C."/>
        </authorList>
    </citation>
    <scope>FUNCTION</scope>
</reference>
<reference key="8">
    <citation type="journal article" date="2007" name="J. Biol. Chem.">
        <title>Osteocrin is a specific ligand of the natriuretic Peptide clearance receptor that modulates bone growth.</title>
        <authorList>
            <person name="Moffatt P."/>
            <person name="Thomas G."/>
            <person name="Sellin K."/>
            <person name="Bessette M.C."/>
            <person name="Lafreniere F."/>
            <person name="Akhouayri O."/>
            <person name="St-Arnaud R."/>
            <person name="Lanctot C."/>
        </authorList>
    </citation>
    <scope>FUNCTION</scope>
    <scope>INTERACTION WITH OSTN</scope>
</reference>
<reference key="9">
    <citation type="journal article" date="2009" name="J. Endocrinol.">
        <title>Competitive binding of musclin to natriuretic peptide receptor 3 with atrial natriuretic peptide.</title>
        <authorList>
            <person name="Kita S."/>
            <person name="Nishizawa H."/>
            <person name="Okuno Y."/>
            <person name="Tanaka M."/>
            <person name="Yasui A."/>
            <person name="Matsuda M."/>
            <person name="Yamada Y."/>
            <person name="Shimomura I."/>
        </authorList>
    </citation>
    <scope>FUNCTION</scope>
</reference>
<reference key="10">
    <citation type="journal article" date="2010" name="Cell">
        <title>A tissue-specific atlas of mouse protein phosphorylation and expression.</title>
        <authorList>
            <person name="Huttlin E.L."/>
            <person name="Jedrychowski M.P."/>
            <person name="Elias J.E."/>
            <person name="Goswami T."/>
            <person name="Rad R."/>
            <person name="Beausoleil S.A."/>
            <person name="Villen J."/>
            <person name="Haas W."/>
            <person name="Sowa M.E."/>
            <person name="Gygi S.P."/>
        </authorList>
    </citation>
    <scope>IDENTIFICATION BY MASS SPECTROMETRY [LARGE SCALE ANALYSIS]</scope>
    <source>
        <tissue>Heart</tissue>
        <tissue>Lung</tissue>
    </source>
</reference>
<accession>P70180</accession>
<accession>G3X9E5</accession>
<accession>P97804</accession>
<accession>Q9R025</accession>
<accession>Q9R027</accession>
<accession>Q9R028</accession>
<proteinExistence type="evidence at protein level"/>
<organism>
    <name type="scientific">Mus musculus</name>
    <name type="common">Mouse</name>
    <dbReference type="NCBI Taxonomy" id="10090"/>
    <lineage>
        <taxon>Eukaryota</taxon>
        <taxon>Metazoa</taxon>
        <taxon>Chordata</taxon>
        <taxon>Craniata</taxon>
        <taxon>Vertebrata</taxon>
        <taxon>Euteleostomi</taxon>
        <taxon>Mammalia</taxon>
        <taxon>Eutheria</taxon>
        <taxon>Euarchontoglires</taxon>
        <taxon>Glires</taxon>
        <taxon>Rodentia</taxon>
        <taxon>Myomorpha</taxon>
        <taxon>Muroidea</taxon>
        <taxon>Muridae</taxon>
        <taxon>Murinae</taxon>
        <taxon>Mus</taxon>
        <taxon>Mus</taxon>
    </lineage>
</organism>
<keyword id="KW-1003">Cell membrane</keyword>
<keyword id="KW-0868">Chloride</keyword>
<keyword id="KW-0225">Disease variant</keyword>
<keyword id="KW-1015">Disulfide bond</keyword>
<keyword id="KW-0325">Glycoprotein</keyword>
<keyword id="KW-0472">Membrane</keyword>
<keyword id="KW-0675">Receptor</keyword>
<keyword id="KW-1185">Reference proteome</keyword>
<keyword id="KW-0732">Signal</keyword>
<keyword id="KW-0812">Transmembrane</keyword>
<keyword id="KW-1133">Transmembrane helix</keyword>
<name>ANPRC_MOUSE</name>
<dbReference type="EMBL" id="D78175">
    <property type="protein sequence ID" value="BAA11241.1"/>
    <property type="molecule type" value="mRNA"/>
</dbReference>
<dbReference type="EMBL" id="AF131861">
    <property type="protein sequence ID" value="AAF00104.1"/>
    <property type="molecule type" value="Genomic_DNA"/>
</dbReference>
<dbReference type="EMBL" id="AF131862">
    <property type="protein sequence ID" value="AAF00105.1"/>
    <property type="molecule type" value="Genomic_DNA"/>
</dbReference>
<dbReference type="EMBL" id="AF131864">
    <property type="protein sequence ID" value="AAF00107.1"/>
    <property type="molecule type" value="Genomic_DNA"/>
</dbReference>
<dbReference type="EMBL" id="AC134793">
    <property type="status" value="NOT_ANNOTATED_CDS"/>
    <property type="molecule type" value="Genomic_DNA"/>
</dbReference>
<dbReference type="EMBL" id="CH466581">
    <property type="protein sequence ID" value="EDL03281.1"/>
    <property type="molecule type" value="Genomic_DNA"/>
</dbReference>
<dbReference type="EMBL" id="U72676">
    <property type="protein sequence ID" value="AAB51036.1"/>
    <property type="molecule type" value="mRNA"/>
</dbReference>
<dbReference type="CCDS" id="CCDS27386.1"/>
<dbReference type="PIR" id="S71332">
    <property type="entry name" value="S71332"/>
</dbReference>
<dbReference type="RefSeq" id="NP_032754.2">
    <property type="nucleotide sequence ID" value="NM_008728.3"/>
</dbReference>
<dbReference type="SMR" id="P70180"/>
<dbReference type="DIP" id="DIP-46248N"/>
<dbReference type="FunCoup" id="P70180">
    <property type="interactions" value="47"/>
</dbReference>
<dbReference type="IntAct" id="P70180">
    <property type="interactions" value="2"/>
</dbReference>
<dbReference type="STRING" id="10090.ENSMUSP00000066737"/>
<dbReference type="BindingDB" id="P70180"/>
<dbReference type="ChEMBL" id="CHEMBL4711"/>
<dbReference type="GlyCosmos" id="P70180">
    <property type="glycosylation" value="3 sites, No reported glycans"/>
</dbReference>
<dbReference type="GlyGen" id="P70180">
    <property type="glycosylation" value="3 sites, 3 N-linked glycans (3 sites)"/>
</dbReference>
<dbReference type="iPTMnet" id="P70180"/>
<dbReference type="PhosphoSitePlus" id="P70180"/>
<dbReference type="PaxDb" id="10090-ENSMUSP00000066737"/>
<dbReference type="ProteomicsDB" id="296047"/>
<dbReference type="Pumba" id="P70180"/>
<dbReference type="Antibodypedia" id="5387">
    <property type="antibodies" value="486 antibodies from 34 providers"/>
</dbReference>
<dbReference type="DNASU" id="18162"/>
<dbReference type="Ensembl" id="ENSMUST00000066529.5">
    <property type="protein sequence ID" value="ENSMUSP00000066737.4"/>
    <property type="gene ID" value="ENSMUSG00000022206.8"/>
</dbReference>
<dbReference type="GeneID" id="18162"/>
<dbReference type="KEGG" id="mmu:18162"/>
<dbReference type="UCSC" id="uc007vhf.2">
    <property type="organism name" value="mouse"/>
</dbReference>
<dbReference type="AGR" id="MGI:97373"/>
<dbReference type="CTD" id="4883"/>
<dbReference type="MGI" id="MGI:97373">
    <property type="gene designation" value="Npr3"/>
</dbReference>
<dbReference type="VEuPathDB" id="HostDB:ENSMUSG00000022206"/>
<dbReference type="eggNOG" id="KOG1023">
    <property type="taxonomic scope" value="Eukaryota"/>
</dbReference>
<dbReference type="GeneTree" id="ENSGT00440000033872"/>
<dbReference type="HOGENOM" id="CLU_013995_1_0_1"/>
<dbReference type="InParanoid" id="P70180"/>
<dbReference type="OMA" id="ETRVMEH"/>
<dbReference type="OrthoDB" id="10065302at2759"/>
<dbReference type="PhylomeDB" id="P70180"/>
<dbReference type="TreeFam" id="TF106339"/>
<dbReference type="BioGRID-ORCS" id="18162">
    <property type="hits" value="5 hits in 77 CRISPR screens"/>
</dbReference>
<dbReference type="ChiTaRS" id="Npr3">
    <property type="organism name" value="mouse"/>
</dbReference>
<dbReference type="PRO" id="PR:P70180"/>
<dbReference type="Proteomes" id="UP000000589">
    <property type="component" value="Chromosome 15"/>
</dbReference>
<dbReference type="RNAct" id="P70180">
    <property type="molecule type" value="protein"/>
</dbReference>
<dbReference type="Bgee" id="ENSMUSG00000022206">
    <property type="expression patterns" value="Expressed in epididymal fat pad and 238 other cell types or tissues"/>
</dbReference>
<dbReference type="ExpressionAtlas" id="P70180">
    <property type="expression patterns" value="baseline and differential"/>
</dbReference>
<dbReference type="GO" id="GO:0005886">
    <property type="term" value="C:plasma membrane"/>
    <property type="evidence" value="ECO:0007669"/>
    <property type="project" value="UniProtKB-SubCell"/>
</dbReference>
<dbReference type="GO" id="GO:0032991">
    <property type="term" value="C:protein-containing complex"/>
    <property type="evidence" value="ECO:0007669"/>
    <property type="project" value="Ensembl"/>
</dbReference>
<dbReference type="GO" id="GO:0031404">
    <property type="term" value="F:chloride ion binding"/>
    <property type="evidence" value="ECO:0007669"/>
    <property type="project" value="Ensembl"/>
</dbReference>
<dbReference type="GO" id="GO:0016941">
    <property type="term" value="F:natriuretic peptide receptor activity"/>
    <property type="evidence" value="ECO:0000250"/>
    <property type="project" value="UniProtKB"/>
</dbReference>
<dbReference type="GO" id="GO:0042277">
    <property type="term" value="F:peptide binding"/>
    <property type="evidence" value="ECO:0007669"/>
    <property type="project" value="Ensembl"/>
</dbReference>
<dbReference type="GO" id="GO:0017046">
    <property type="term" value="F:peptide hormone binding"/>
    <property type="evidence" value="ECO:0007669"/>
    <property type="project" value="Ensembl"/>
</dbReference>
<dbReference type="GO" id="GO:0042803">
    <property type="term" value="F:protein homodimerization activity"/>
    <property type="evidence" value="ECO:0007669"/>
    <property type="project" value="Ensembl"/>
</dbReference>
<dbReference type="GO" id="GO:0001525">
    <property type="term" value="P:angiogenesis"/>
    <property type="evidence" value="ECO:0000315"/>
    <property type="project" value="MGI"/>
</dbReference>
<dbReference type="GO" id="GO:0001974">
    <property type="term" value="P:blood vessel remodeling"/>
    <property type="evidence" value="ECO:0000315"/>
    <property type="project" value="MGI"/>
</dbReference>
<dbReference type="GO" id="GO:0120163">
    <property type="term" value="P:negative regulation of cold-induced thermogenesis"/>
    <property type="evidence" value="ECO:0000315"/>
    <property type="project" value="YuBioLab"/>
</dbReference>
<dbReference type="GO" id="GO:0002158">
    <property type="term" value="P:osteoclast proliferation"/>
    <property type="evidence" value="ECO:0000315"/>
    <property type="project" value="UniProtKB"/>
</dbReference>
<dbReference type="GO" id="GO:0035810">
    <property type="term" value="P:positive regulation of urine volume"/>
    <property type="evidence" value="ECO:0000315"/>
    <property type="project" value="UniProtKB"/>
</dbReference>
<dbReference type="GO" id="GO:0008217">
    <property type="term" value="P:regulation of blood pressure"/>
    <property type="evidence" value="ECO:0000315"/>
    <property type="project" value="UniProtKB"/>
</dbReference>
<dbReference type="GO" id="GO:0033688">
    <property type="term" value="P:regulation of osteoblast proliferation"/>
    <property type="evidence" value="ECO:0000315"/>
    <property type="project" value="UniProtKB"/>
</dbReference>
<dbReference type="GO" id="GO:0002931">
    <property type="term" value="P:response to ischemia"/>
    <property type="evidence" value="ECO:0000315"/>
    <property type="project" value="MGI"/>
</dbReference>
<dbReference type="GO" id="GO:0001501">
    <property type="term" value="P:skeletal system development"/>
    <property type="evidence" value="ECO:0000314"/>
    <property type="project" value="HGNC"/>
</dbReference>
<dbReference type="CDD" id="cd06386">
    <property type="entry name" value="PBP1_NPR_C"/>
    <property type="match status" value="1"/>
</dbReference>
<dbReference type="CDD" id="cd12841">
    <property type="entry name" value="TM_EphA1"/>
    <property type="match status" value="1"/>
</dbReference>
<dbReference type="FunFam" id="3.40.50.2300:FF:000147">
    <property type="entry name" value="Atrial natriuretic peptide receptor 3"/>
    <property type="match status" value="1"/>
</dbReference>
<dbReference type="FunFam" id="3.40.50.2300:FF:000246">
    <property type="entry name" value="Atrial natriuretic peptide receptor 3"/>
    <property type="match status" value="1"/>
</dbReference>
<dbReference type="Gene3D" id="3.40.50.2300">
    <property type="match status" value="2"/>
</dbReference>
<dbReference type="InterPro" id="IPR001828">
    <property type="entry name" value="ANF_lig-bd_rcpt"/>
</dbReference>
<dbReference type="InterPro" id="IPR052612">
    <property type="entry name" value="ANP_Clearance_Receptor"/>
</dbReference>
<dbReference type="InterPro" id="IPR001170">
    <property type="entry name" value="ANPR/GUC"/>
</dbReference>
<dbReference type="InterPro" id="IPR028082">
    <property type="entry name" value="Peripla_BP_I"/>
</dbReference>
<dbReference type="PANTHER" id="PTHR44755:SF1">
    <property type="entry name" value="ATRIAL NATRIURETIC PEPTIDE RECEPTOR 3"/>
    <property type="match status" value="1"/>
</dbReference>
<dbReference type="PANTHER" id="PTHR44755">
    <property type="entry name" value="NATRIURETIC PEPTIDE RECEPTOR 3-RELATED"/>
    <property type="match status" value="1"/>
</dbReference>
<dbReference type="Pfam" id="PF01094">
    <property type="entry name" value="ANF_receptor"/>
    <property type="match status" value="1"/>
</dbReference>
<dbReference type="PRINTS" id="PR00255">
    <property type="entry name" value="NATPEPTIDER"/>
</dbReference>
<dbReference type="SUPFAM" id="SSF53822">
    <property type="entry name" value="Periplasmic binding protein-like I"/>
    <property type="match status" value="1"/>
</dbReference>
<dbReference type="PROSITE" id="PS00458">
    <property type="entry name" value="ANF_RECEPTORS"/>
    <property type="match status" value="1"/>
</dbReference>
<sequence length="536" mass="59808">MRSLLLFTFSACVLLARVLLAGGASSGAGDTRPGSRRRAREALAAQKIEVLVLLPRDDSYLFSLARVRPAIEYALRSVEGNGTGRKLLPPGTRFQVAYEDSDCGNRALFSLVDRVAAARGAKPDLILGPVCEYAAAPVARLASHWDLPMLSAGALAAGFQHKDTEYSHLTRVAPAYAKMGEMMLALFRHHHWSRAALVYSDDKLERNCYFTLEGVHEVFQEEGLHTSAYNFDETKDLDLDDIVRYIQGSERVVIMCASGDTIRRIMLAVHRHGMTSGDYAFFNIELFNSSSYGDGSWRRGDKHDSEAKQAYSSLQTVTLLRTVKPEFEKFSMEVKSSVEKQGLNEEDYVNMFVEGFHDAILLYVLALHEVLRAGYSKKDGGKIIQQTWNRTFEGIAGQVSIDANGDRYGDFSVVAMTDTEAGTQEVIGDYFGKEGRFQMRSNVKYPWGPLKLRLDETRIVEHTNSSPCKSSGGLEESAVTGIVVGALLGAGLLMAFYFFRKKYRITIERRNQQEESNIGKHRELREDSIRSHFSVA</sequence>
<gene>
    <name type="primary">Npr3</name>
</gene>
<evidence type="ECO:0000250" key="1"/>
<evidence type="ECO:0000250" key="2">
    <source>
        <dbReference type="UniProtKB" id="P10730"/>
    </source>
</evidence>
<evidence type="ECO:0000250" key="3">
    <source>
        <dbReference type="UniProtKB" id="P17342"/>
    </source>
</evidence>
<evidence type="ECO:0000255" key="4"/>
<evidence type="ECO:0000269" key="5">
    <source>
    </source>
</evidence>
<evidence type="ECO:0000269" key="6">
    <source>
    </source>
</evidence>
<evidence type="ECO:0000269" key="7">
    <source>
    </source>
</evidence>
<evidence type="ECO:0000269" key="8">
    <source>
    </source>
</evidence>
<evidence type="ECO:0000269" key="9">
    <source>
    </source>
</evidence>
<evidence type="ECO:0000305" key="10"/>
<comment type="function">
    <text evidence="5 7 8 9">Receptor for the natriuretic peptide hormones, binding with similar affinities atrial natriuretic peptide NPPA/ANP, brain natriuretic peptide NPPB/BNP, and C-type natriuretic peptide NPPC/CNP (PubMed:10377427, PubMed:17951249). May function as a clearance receptor for NPPA, NPPB and NPPC, regulating their local concentrations and effects (PubMed:10377427, PubMed:17951249). Acts as a regulator of osteoblast differentiation and bone growth by binding to its ligand osteocrin, thereby preventing binding between NPR3/NPR-C and natriuretic peptides, leading to increase cGMP production (PubMed:14523025, PubMed:19244276).</text>
</comment>
<comment type="subunit">
    <text evidence="3 8">Homodimer; disulfide-linked (By similarity). Interacts with OSTN (PubMed:17951249).</text>
</comment>
<comment type="subcellular location">
    <subcellularLocation>
        <location evidence="3">Cell membrane</location>
        <topology>Single-pass type I membrane protein</topology>
    </subcellularLocation>
</comment>
<comment type="disease">
    <text evidence="6">Defects in Npr3 are the cause of a number of skeletal-overgrowth phenotypes, Longjohn (Lgj), Longjohn-2J (Lgj-2J) and Strigosus (Stri). These are all recessive conditions characterized by an elongated body, thoracic kyphosis, arachnodactyly, and sacral and/or tail kinks, but no significant changes in craniofacial structures (PubMed:10468599).</text>
</comment>
<comment type="disruption phenotype">
    <text evidence="5">Half of the mice dies before weaning. They display reduced ability to concentrate urine, a lower blood pressure, and skeletal abnormalities. Despite a reduced half-life of NPPA in the circulation, the plasma levels of NPPA and NPPB are not affected.</text>
</comment>
<comment type="miscellaneous">
    <text evidence="1">Has low affinity for peptide hormones in the absence of bound chloride.</text>
</comment>
<comment type="similarity">
    <text evidence="10">Belongs to the ANF receptor family.</text>
</comment>